<dbReference type="EMBL" id="AB016472">
    <property type="protein sequence ID" value="BAA74527.1"/>
    <property type="molecule type" value="Genomic_DNA"/>
</dbReference>
<dbReference type="EMBL" id="AJ005196">
    <property type="protein sequence ID" value="CAA06433.1"/>
    <property type="status" value="ALT_SEQ"/>
    <property type="molecule type" value="mRNA"/>
</dbReference>
<dbReference type="EMBL" id="DQ473518">
    <property type="protein sequence ID" value="ABF47278.1"/>
    <property type="molecule type" value="Genomic_DNA"/>
</dbReference>
<dbReference type="EMBL" id="DQ473519">
    <property type="protein sequence ID" value="ABF47279.1"/>
    <property type="molecule type" value="mRNA"/>
</dbReference>
<dbReference type="EMBL" id="DQ473520">
    <property type="protein sequence ID" value="ABF19058.1"/>
    <property type="molecule type" value="Genomic_DNA"/>
</dbReference>
<dbReference type="EMBL" id="DQ473521">
    <property type="protein sequence ID" value="ABF19059.1"/>
    <property type="molecule type" value="mRNA"/>
</dbReference>
<dbReference type="EMBL" id="Z97340">
    <property type="protein sequence ID" value="CAB10390.1"/>
    <property type="status" value="ALT_SEQ"/>
    <property type="molecule type" value="Genomic_DNA"/>
</dbReference>
<dbReference type="EMBL" id="AL161543">
    <property type="protein sequence ID" value="CAB78653.1"/>
    <property type="status" value="ALT_SEQ"/>
    <property type="molecule type" value="Genomic_DNA"/>
</dbReference>
<dbReference type="EMBL" id="CP002687">
    <property type="protein sequence ID" value="AEE83694.2"/>
    <property type="molecule type" value="Genomic_DNA"/>
</dbReference>
<dbReference type="EMBL" id="AK175378">
    <property type="protein sequence ID" value="BAD43141.1"/>
    <property type="molecule type" value="mRNA"/>
</dbReference>
<dbReference type="EMBL" id="AK175737">
    <property type="protein sequence ID" value="BAD43500.1"/>
    <property type="molecule type" value="mRNA"/>
</dbReference>
<dbReference type="EMBL" id="AK175959">
    <property type="protein sequence ID" value="BAD43722.1"/>
    <property type="molecule type" value="mRNA"/>
</dbReference>
<dbReference type="EMBL" id="AK176614">
    <property type="protein sequence ID" value="BAD44377.1"/>
    <property type="molecule type" value="mRNA"/>
</dbReference>
<dbReference type="PIR" id="D71427">
    <property type="entry name" value="D71427"/>
</dbReference>
<dbReference type="PIR" id="T51247">
    <property type="entry name" value="T51247"/>
</dbReference>
<dbReference type="RefSeq" id="NP_193346.5">
    <property type="nucleotide sequence ID" value="NM_117704.6"/>
</dbReference>
<dbReference type="SMR" id="Q9ZWJ9"/>
<dbReference type="BioGRID" id="12591">
    <property type="interactions" value="12"/>
</dbReference>
<dbReference type="FunCoup" id="Q9ZWJ9">
    <property type="interactions" value="326"/>
</dbReference>
<dbReference type="IntAct" id="Q9ZWJ9">
    <property type="interactions" value="11"/>
</dbReference>
<dbReference type="STRING" id="3702.Q9ZWJ9"/>
<dbReference type="PaxDb" id="3702-AT4G16110.1"/>
<dbReference type="ProteomicsDB" id="246936"/>
<dbReference type="GeneID" id="827297"/>
<dbReference type="KEGG" id="ath:AT4G16110"/>
<dbReference type="Araport" id="AT4G16110"/>
<dbReference type="TAIR" id="AT4G16110"/>
<dbReference type="eggNOG" id="KOG1601">
    <property type="taxonomic scope" value="Eukaryota"/>
</dbReference>
<dbReference type="HOGENOM" id="CLU_413684_0_0_1"/>
<dbReference type="InParanoid" id="Q9ZWJ9"/>
<dbReference type="PhylomeDB" id="Q9ZWJ9"/>
<dbReference type="PRO" id="PR:Q9ZWJ9"/>
<dbReference type="Proteomes" id="UP000006548">
    <property type="component" value="Chromosome 4"/>
</dbReference>
<dbReference type="ExpressionAtlas" id="Q9ZWJ9">
    <property type="expression patterns" value="baseline and differential"/>
</dbReference>
<dbReference type="GO" id="GO:0005829">
    <property type="term" value="C:cytosol"/>
    <property type="evidence" value="ECO:0007005"/>
    <property type="project" value="TAIR"/>
</dbReference>
<dbReference type="GO" id="GO:0005634">
    <property type="term" value="C:nucleus"/>
    <property type="evidence" value="ECO:0000314"/>
    <property type="project" value="TAIR"/>
</dbReference>
<dbReference type="GO" id="GO:0003677">
    <property type="term" value="F:DNA binding"/>
    <property type="evidence" value="ECO:0007669"/>
    <property type="project" value="UniProtKB-KW"/>
</dbReference>
<dbReference type="GO" id="GO:0003700">
    <property type="term" value="F:DNA-binding transcription factor activity"/>
    <property type="evidence" value="ECO:0000314"/>
    <property type="project" value="TAIR"/>
</dbReference>
<dbReference type="GO" id="GO:0000156">
    <property type="term" value="F:phosphorelay response regulator activity"/>
    <property type="evidence" value="ECO:0000250"/>
    <property type="project" value="TAIR"/>
</dbReference>
<dbReference type="GO" id="GO:0071368">
    <property type="term" value="P:cellular response to cytokinin stimulus"/>
    <property type="evidence" value="ECO:0000315"/>
    <property type="project" value="TAIR"/>
</dbReference>
<dbReference type="GO" id="GO:0009736">
    <property type="term" value="P:cytokinin-activated signaling pathway"/>
    <property type="evidence" value="ECO:0000304"/>
    <property type="project" value="TAIR"/>
</dbReference>
<dbReference type="GO" id="GO:0009873">
    <property type="term" value="P:ethylene-activated signaling pathway"/>
    <property type="evidence" value="ECO:0000315"/>
    <property type="project" value="TAIR"/>
</dbReference>
<dbReference type="GO" id="GO:0010150">
    <property type="term" value="P:leaf senescence"/>
    <property type="evidence" value="ECO:0000315"/>
    <property type="project" value="UniProtKB"/>
</dbReference>
<dbReference type="GO" id="GO:0010082">
    <property type="term" value="P:regulation of root meristem growth"/>
    <property type="evidence" value="ECO:0000315"/>
    <property type="project" value="TAIR"/>
</dbReference>
<dbReference type="GO" id="GO:0080113">
    <property type="term" value="P:regulation of seed growth"/>
    <property type="evidence" value="ECO:0000315"/>
    <property type="project" value="TAIR"/>
</dbReference>
<dbReference type="GO" id="GO:0010119">
    <property type="term" value="P:regulation of stomatal movement"/>
    <property type="evidence" value="ECO:0000315"/>
    <property type="project" value="TAIR"/>
</dbReference>
<dbReference type="GO" id="GO:0009735">
    <property type="term" value="P:response to cytokinin"/>
    <property type="evidence" value="ECO:0000316"/>
    <property type="project" value="TAIR"/>
</dbReference>
<dbReference type="GO" id="GO:0009723">
    <property type="term" value="P:response to ethylene"/>
    <property type="evidence" value="ECO:0000315"/>
    <property type="project" value="TAIR"/>
</dbReference>
<dbReference type="GO" id="GO:0048364">
    <property type="term" value="P:root development"/>
    <property type="evidence" value="ECO:0000315"/>
    <property type="project" value="TAIR"/>
</dbReference>
<dbReference type="CDD" id="cd17584">
    <property type="entry name" value="REC_typeB_ARR-like"/>
    <property type="match status" value="1"/>
</dbReference>
<dbReference type="FunFam" id="1.10.10.60:FF:000007">
    <property type="entry name" value="Two-component response regulator"/>
    <property type="match status" value="1"/>
</dbReference>
<dbReference type="FunFam" id="3.40.50.2300:FF:000699">
    <property type="entry name" value="Two-component response regulator"/>
    <property type="match status" value="1"/>
</dbReference>
<dbReference type="Gene3D" id="3.40.50.2300">
    <property type="match status" value="1"/>
</dbReference>
<dbReference type="Gene3D" id="1.10.10.60">
    <property type="entry name" value="Homeodomain-like"/>
    <property type="match status" value="1"/>
</dbReference>
<dbReference type="InterPro" id="IPR045279">
    <property type="entry name" value="ARR-like"/>
</dbReference>
<dbReference type="InterPro" id="IPR011006">
    <property type="entry name" value="CheY-like_superfamily"/>
</dbReference>
<dbReference type="InterPro" id="IPR009057">
    <property type="entry name" value="Homeodomain-like_sf"/>
</dbReference>
<dbReference type="InterPro" id="IPR017930">
    <property type="entry name" value="Myb_dom"/>
</dbReference>
<dbReference type="InterPro" id="IPR006447">
    <property type="entry name" value="Myb_dom_plants"/>
</dbReference>
<dbReference type="InterPro" id="IPR017053">
    <property type="entry name" value="Response_reg_B-typ_pln"/>
</dbReference>
<dbReference type="InterPro" id="IPR001005">
    <property type="entry name" value="SANT/Myb"/>
</dbReference>
<dbReference type="InterPro" id="IPR001789">
    <property type="entry name" value="Sig_transdc_resp-reg_receiver"/>
</dbReference>
<dbReference type="NCBIfam" id="TIGR01557">
    <property type="entry name" value="myb_SHAQKYF"/>
    <property type="match status" value="1"/>
</dbReference>
<dbReference type="PANTHER" id="PTHR43874">
    <property type="entry name" value="TWO-COMPONENT RESPONSE REGULATOR"/>
    <property type="match status" value="1"/>
</dbReference>
<dbReference type="PANTHER" id="PTHR43874:SF67">
    <property type="entry name" value="TWO-COMPONENT RESPONSE REGULATOR ARR2"/>
    <property type="match status" value="1"/>
</dbReference>
<dbReference type="Pfam" id="PF00249">
    <property type="entry name" value="Myb_DNA-binding"/>
    <property type="match status" value="1"/>
</dbReference>
<dbReference type="Pfam" id="PF00072">
    <property type="entry name" value="Response_reg"/>
    <property type="match status" value="1"/>
</dbReference>
<dbReference type="PIRSF" id="PIRSF036392">
    <property type="entry name" value="RR_ARR_type-B"/>
    <property type="match status" value="1"/>
</dbReference>
<dbReference type="SMART" id="SM00448">
    <property type="entry name" value="REC"/>
    <property type="match status" value="1"/>
</dbReference>
<dbReference type="SUPFAM" id="SSF52172">
    <property type="entry name" value="CheY-like"/>
    <property type="match status" value="1"/>
</dbReference>
<dbReference type="SUPFAM" id="SSF46689">
    <property type="entry name" value="Homeodomain-like"/>
    <property type="match status" value="1"/>
</dbReference>
<dbReference type="PROSITE" id="PS51294">
    <property type="entry name" value="HTH_MYB"/>
    <property type="match status" value="1"/>
</dbReference>
<dbReference type="PROSITE" id="PS50110">
    <property type="entry name" value="RESPONSE_REGULATORY"/>
    <property type="match status" value="1"/>
</dbReference>
<protein>
    <recommendedName>
        <fullName>Two-component response regulator ARR2</fullName>
    </recommendedName>
    <alternativeName>
        <fullName>Receiver-like protein 5</fullName>
    </alternativeName>
</protein>
<keyword id="KW-0010">Activator</keyword>
<keyword id="KW-0932">Cytokinin signaling pathway</keyword>
<keyword id="KW-0238">DNA-binding</keyword>
<keyword id="KW-0936">Ethylene signaling pathway</keyword>
<keyword id="KW-0539">Nucleus</keyword>
<keyword id="KW-0597">Phosphoprotein</keyword>
<keyword id="KW-1185">Reference proteome</keyword>
<keyword id="KW-0804">Transcription</keyword>
<keyword id="KW-0805">Transcription regulation</keyword>
<keyword id="KW-0902">Two-component regulatory system</keyword>
<proteinExistence type="evidence at protein level"/>
<gene>
    <name type="primary">ARR2</name>
    <name type="synonym">ARP5</name>
    <name type="ordered locus">At4g16110</name>
    <name type="ORF">dl4095w</name>
    <name type="ORF">FCAALL.297</name>
</gene>
<name>ARR2_ARATH</name>
<evidence type="ECO:0000250" key="1"/>
<evidence type="ECO:0000255" key="2"/>
<evidence type="ECO:0000255" key="3">
    <source>
        <dbReference type="PROSITE-ProRule" id="PRU00169"/>
    </source>
</evidence>
<evidence type="ECO:0000255" key="4">
    <source>
        <dbReference type="PROSITE-ProRule" id="PRU00625"/>
    </source>
</evidence>
<evidence type="ECO:0000256" key="5">
    <source>
        <dbReference type="SAM" id="MobiDB-lite"/>
    </source>
</evidence>
<evidence type="ECO:0000269" key="6">
    <source>
    </source>
</evidence>
<evidence type="ECO:0000269" key="7">
    <source>
    </source>
</evidence>
<evidence type="ECO:0000269" key="8">
    <source>
    </source>
</evidence>
<evidence type="ECO:0000269" key="9">
    <source>
    </source>
</evidence>
<evidence type="ECO:0000269" key="10">
    <source>
    </source>
</evidence>
<evidence type="ECO:0000269" key="11">
    <source>
    </source>
</evidence>
<evidence type="ECO:0000269" key="12">
    <source>
    </source>
</evidence>
<evidence type="ECO:0000269" key="13">
    <source>
    </source>
</evidence>
<evidence type="ECO:0000305" key="14"/>
<organism>
    <name type="scientific">Arabidopsis thaliana</name>
    <name type="common">Mouse-ear cress</name>
    <dbReference type="NCBI Taxonomy" id="3702"/>
    <lineage>
        <taxon>Eukaryota</taxon>
        <taxon>Viridiplantae</taxon>
        <taxon>Streptophyta</taxon>
        <taxon>Embryophyta</taxon>
        <taxon>Tracheophyta</taxon>
        <taxon>Spermatophyta</taxon>
        <taxon>Magnoliopsida</taxon>
        <taxon>eudicotyledons</taxon>
        <taxon>Gunneridae</taxon>
        <taxon>Pentapetalae</taxon>
        <taxon>rosids</taxon>
        <taxon>malvids</taxon>
        <taxon>Brassicales</taxon>
        <taxon>Brassicaceae</taxon>
        <taxon>Camelineae</taxon>
        <taxon>Arabidopsis</taxon>
    </lineage>
</organism>
<accession>Q9ZWJ9</accession>
<accession>C3PTB4</accession>
<accession>O23460</accession>
<accession>Q680A8</accession>
<accession>Q682I9</accession>
<comment type="function">
    <text evidence="7 8 11 12">Transcriptional activator that binds specifically to the DNA sequence 5'-[AG]GATT-3'. Functions as a response regulator involved in His-to-Asp phosphorelay signal transduction system. Phosphorylation of the Asp residue in the receiver domain activates the ability of the protein to promote the transcription of target genes. Could directly activate some type-A response regulators in response to cytokinins. Involved in the expression of nuclear genes for components of mitochondrial complex I. Promotes cytokinin-mediated leaf longevity. Involved in the ethylene signaling pathway in an ETR1-dependent manner and in the cytokinin signaling pathway.</text>
</comment>
<comment type="subunit">
    <text evidence="1 7 9">Binds the target DNA as a monomer (By similarity). Interacts with histidine-containing phosphotransfer proteins.</text>
</comment>
<comment type="interaction">
    <interactant intactId="EBI-1101028">
        <id>Q9ZWJ9</id>
    </interactant>
    <interactant intactId="EBI-1100673">
        <id>Q9ZNV9</id>
        <label>AHP1</label>
    </interactant>
    <organismsDiffer>false</organismsDiffer>
    <experiments>4</experiments>
</comment>
<comment type="interaction">
    <interactant intactId="EBI-1101028">
        <id>Q9ZWJ9</id>
    </interactant>
    <interactant intactId="EBI-1100687">
        <id>Q9ZNV8</id>
        <label>AHP2</label>
    </interactant>
    <organismsDiffer>false</organismsDiffer>
    <experiments>7</experiments>
</comment>
<comment type="interaction">
    <interactant intactId="EBI-1101028">
        <id>Q9ZWJ9</id>
    </interactant>
    <interactant intactId="EBI-1775648">
        <id>Q0WPF2</id>
        <label>PCFS4</label>
    </interactant>
    <organismsDiffer>false</organismsDiffer>
    <experiments>3</experiments>
</comment>
<comment type="interaction">
    <interactant intactId="EBI-1101028">
        <id>Q9ZWJ9</id>
    </interactant>
    <interactant intactId="EBI-963624">
        <id>Q9SLH3</id>
        <label>RGA</label>
    </interactant>
    <organismsDiffer>false</organismsDiffer>
    <experiments>5</experiments>
</comment>
<comment type="interaction">
    <interactant intactId="EBI-1101028">
        <id>Q9ZWJ9</id>
    </interactant>
    <interactant intactId="EBI-4426144">
        <id>Q9C9L2</id>
        <label>TCP15</label>
    </interactant>
    <organismsDiffer>false</organismsDiffer>
    <experiments>3</experiments>
</comment>
<comment type="subcellular location">
    <subcellularLocation>
        <location evidence="4 6 8 11">Nucleus</location>
    </subcellularLocation>
</comment>
<comment type="tissue specificity">
    <text evidence="7 10 13">Detected in the whole plant. Predominantly expressed in pollen.</text>
</comment>
<comment type="PTM">
    <text evidence="11 12">Two-component system major event consists of a His-to-Asp phosphorelay between a sensor histidine kinase (HK) and a response regulator (RR). In plants, the His-to-Asp phosphorelay involves an additional intermediate named Histidine-containing phosphotransfer protein (HPt). This multistep phosphorelay consists of a His-Asp-His-Asp sequential transfer of a phosphate group between first a His and an Asp of the HK protein, followed by the transfer to a conserved His of the HPt protein and finally the transfer to an Asp in the receiver domain of the RR protein. Phosphorylated in response to cytokinin mediated by AHK3.</text>
</comment>
<comment type="disruption phenotype">
    <text evidence="11">Retarded growth and development, and early flowering. Reduced responses to ethylene and cytokinin.</text>
</comment>
<comment type="similarity">
    <text evidence="14">Belongs to the ARR family. Type-B subfamily.</text>
</comment>
<comment type="sequence caution" evidence="14">
    <conflict type="miscellaneous discrepancy">
        <sequence resource="EMBL-CDS" id="CAA06433"/>
    </conflict>
    <text>Artifacts of PCR amplification.</text>
</comment>
<comment type="sequence caution" evidence="14">
    <conflict type="erroneous gene model prediction">
        <sequence resource="EMBL-CDS" id="CAB10390"/>
    </conflict>
</comment>
<comment type="sequence caution" evidence="14">
    <conflict type="erroneous gene model prediction">
        <sequence resource="EMBL-CDS" id="CAB78653"/>
    </conflict>
</comment>
<reference key="1">
    <citation type="journal article" date="1998" name="Plant Cell Physiol.">
        <title>Two-component response regulators from Arabidopsis thaliana contain a putative DNA-binding motif.</title>
        <authorList>
            <person name="Sakai H."/>
            <person name="Aoyama T."/>
            <person name="Bono H."/>
            <person name="Oka A."/>
        </authorList>
    </citation>
    <scope>NUCLEOTIDE SEQUENCE [GENOMIC DNA]</scope>
    <scope>TISSUE SPECIFICITY</scope>
    <source>
        <strain>cv. Columbia</strain>
    </source>
</reference>
<reference key="2">
    <citation type="journal article" date="2001" name="Mol. Genet. Genomics">
        <title>The response regulator ARR2: a pollen-specific transcription factor involved in the expression of nuclear genes for components of mitochondrial complex I in Arabidopsis.</title>
        <authorList>
            <person name="Lohrmann J."/>
            <person name="Sweere U."/>
            <person name="Zabaleta E."/>
            <person name="Baeurle I."/>
            <person name="Keitel C."/>
            <person name="Kozma-Bognar L."/>
            <person name="Brennicke A."/>
            <person name="Schaefer E."/>
            <person name="Kudla J."/>
            <person name="Harter K."/>
        </authorList>
    </citation>
    <scope>NUCLEOTIDE SEQUENCE [MRNA]</scope>
    <scope>FUNCTION</scope>
    <scope>TISSUE SPECIFICITY</scope>
    <scope>INTERACTION</scope>
    <source>
        <strain>cv. Columbia</strain>
        <tissue>Leaf</tissue>
    </source>
</reference>
<reference key="3">
    <citation type="journal article" date="2004" name="EMBO J.">
        <title>The response regulator 2 mediates ethylene signalling and hormone signal integration in Arabidopsis.</title>
        <authorList>
            <person name="Hass C."/>
            <person name="Lohrmann J."/>
            <person name="Albrecht V."/>
            <person name="Sweere U."/>
            <person name="Hummel F."/>
            <person name="Yoo S.D."/>
            <person name="Hwang I."/>
            <person name="Zhu T."/>
            <person name="Schaefer E."/>
            <person name="Kudla J."/>
            <person name="Harter K."/>
        </authorList>
    </citation>
    <scope>NUCLEOTIDE SEQUENCE [GENOMIC DNA / MRNA]</scope>
    <scope>VARIANTS ILE-62; ILE-283; VAL-385 AND GLY-655</scope>
    <scope>FUNCTION</scope>
    <scope>DISRUPTION PHENOTYPE</scope>
    <scope>PHOSPHORYLATION AT ASP-80</scope>
    <scope>MUTAGENESIS OF ASP-80</scope>
    <scope>SUBCELLULAR LOCATION</scope>
    <source>
        <strain>cv. Columbia</strain>
        <strain>cv. Landsberg erecta</strain>
    </source>
</reference>
<reference key="4">
    <citation type="journal article" date="1998" name="Nature">
        <title>Analysis of 1.9 Mb of contiguous sequence from chromosome 4 of Arabidopsis thaliana.</title>
        <authorList>
            <person name="Bevan M."/>
            <person name="Bancroft I."/>
            <person name="Bent E."/>
            <person name="Love K."/>
            <person name="Goodman H.M."/>
            <person name="Dean C."/>
            <person name="Bergkamp R."/>
            <person name="Dirkse W."/>
            <person name="van Staveren M."/>
            <person name="Stiekema W."/>
            <person name="Drost L."/>
            <person name="Ridley P."/>
            <person name="Hudson S.-A."/>
            <person name="Patel K."/>
            <person name="Murphy G."/>
            <person name="Piffanelli P."/>
            <person name="Wedler H."/>
            <person name="Wedler E."/>
            <person name="Wambutt R."/>
            <person name="Weitzenegger T."/>
            <person name="Pohl T."/>
            <person name="Terryn N."/>
            <person name="Gielen J."/>
            <person name="Villarroel R."/>
            <person name="De Clercq R."/>
            <person name="van Montagu M."/>
            <person name="Lecharny A."/>
            <person name="Aubourg S."/>
            <person name="Gy I."/>
            <person name="Kreis M."/>
            <person name="Lao N."/>
            <person name="Kavanagh T."/>
            <person name="Hempel S."/>
            <person name="Kotter P."/>
            <person name="Entian K.-D."/>
            <person name="Rieger M."/>
            <person name="Schaefer M."/>
            <person name="Funk B."/>
            <person name="Mueller-Auer S."/>
            <person name="Silvey M."/>
            <person name="James R."/>
            <person name="Monfort A."/>
            <person name="Pons A."/>
            <person name="Puigdomenech P."/>
            <person name="Douka A."/>
            <person name="Voukelatou E."/>
            <person name="Milioni D."/>
            <person name="Hatzopoulos P."/>
            <person name="Piravandi E."/>
            <person name="Obermaier B."/>
            <person name="Hilbert H."/>
            <person name="Duesterhoeft A."/>
            <person name="Moores T."/>
            <person name="Jones J.D.G."/>
            <person name="Eneva T."/>
            <person name="Palme K."/>
            <person name="Benes V."/>
            <person name="Rechmann S."/>
            <person name="Ansorge W."/>
            <person name="Cooke R."/>
            <person name="Berger C."/>
            <person name="Delseny M."/>
            <person name="Voet M."/>
            <person name="Volckaert G."/>
            <person name="Mewes H.-W."/>
            <person name="Klosterman S."/>
            <person name="Schueller C."/>
            <person name="Chalwatzis N."/>
        </authorList>
    </citation>
    <scope>NUCLEOTIDE SEQUENCE [LARGE SCALE GENOMIC DNA]</scope>
    <source>
        <strain>cv. Columbia</strain>
    </source>
</reference>
<reference key="5">
    <citation type="journal article" date="1999" name="Nature">
        <title>Sequence and analysis of chromosome 4 of the plant Arabidopsis thaliana.</title>
        <authorList>
            <person name="Mayer K.F.X."/>
            <person name="Schueller C."/>
            <person name="Wambutt R."/>
            <person name="Murphy G."/>
            <person name="Volckaert G."/>
            <person name="Pohl T."/>
            <person name="Duesterhoeft A."/>
            <person name="Stiekema W."/>
            <person name="Entian K.-D."/>
            <person name="Terryn N."/>
            <person name="Harris B."/>
            <person name="Ansorge W."/>
            <person name="Brandt P."/>
            <person name="Grivell L.A."/>
            <person name="Rieger M."/>
            <person name="Weichselgartner M."/>
            <person name="de Simone V."/>
            <person name="Obermaier B."/>
            <person name="Mache R."/>
            <person name="Mueller M."/>
            <person name="Kreis M."/>
            <person name="Delseny M."/>
            <person name="Puigdomenech P."/>
            <person name="Watson M."/>
            <person name="Schmidtheini T."/>
            <person name="Reichert B."/>
            <person name="Portetelle D."/>
            <person name="Perez-Alonso M."/>
            <person name="Boutry M."/>
            <person name="Bancroft I."/>
            <person name="Vos P."/>
            <person name="Hoheisel J."/>
            <person name="Zimmermann W."/>
            <person name="Wedler H."/>
            <person name="Ridley P."/>
            <person name="Langham S.-A."/>
            <person name="McCullagh B."/>
            <person name="Bilham L."/>
            <person name="Robben J."/>
            <person name="van der Schueren J."/>
            <person name="Grymonprez B."/>
            <person name="Chuang Y.-J."/>
            <person name="Vandenbussche F."/>
            <person name="Braeken M."/>
            <person name="Weltjens I."/>
            <person name="Voet M."/>
            <person name="Bastiaens I."/>
            <person name="Aert R."/>
            <person name="Defoor E."/>
            <person name="Weitzenegger T."/>
            <person name="Bothe G."/>
            <person name="Ramsperger U."/>
            <person name="Hilbert H."/>
            <person name="Braun M."/>
            <person name="Holzer E."/>
            <person name="Brandt A."/>
            <person name="Peters S."/>
            <person name="van Staveren M."/>
            <person name="Dirkse W."/>
            <person name="Mooijman P."/>
            <person name="Klein Lankhorst R."/>
            <person name="Rose M."/>
            <person name="Hauf J."/>
            <person name="Koetter P."/>
            <person name="Berneiser S."/>
            <person name="Hempel S."/>
            <person name="Feldpausch M."/>
            <person name="Lamberth S."/>
            <person name="Van den Daele H."/>
            <person name="De Keyser A."/>
            <person name="Buysshaert C."/>
            <person name="Gielen J."/>
            <person name="Villarroel R."/>
            <person name="De Clercq R."/>
            <person name="van Montagu M."/>
            <person name="Rogers J."/>
            <person name="Cronin A."/>
            <person name="Quail M.A."/>
            <person name="Bray-Allen S."/>
            <person name="Clark L."/>
            <person name="Doggett J."/>
            <person name="Hall S."/>
            <person name="Kay M."/>
            <person name="Lennard N."/>
            <person name="McLay K."/>
            <person name="Mayes R."/>
            <person name="Pettett A."/>
            <person name="Rajandream M.A."/>
            <person name="Lyne M."/>
            <person name="Benes V."/>
            <person name="Rechmann S."/>
            <person name="Borkova D."/>
            <person name="Bloecker H."/>
            <person name="Scharfe M."/>
            <person name="Grimm M."/>
            <person name="Loehnert T.-H."/>
            <person name="Dose S."/>
            <person name="de Haan M."/>
            <person name="Maarse A.C."/>
            <person name="Schaefer M."/>
            <person name="Mueller-Auer S."/>
            <person name="Gabel C."/>
            <person name="Fuchs M."/>
            <person name="Fartmann B."/>
            <person name="Granderath K."/>
            <person name="Dauner D."/>
            <person name="Herzl A."/>
            <person name="Neumann S."/>
            <person name="Argiriou A."/>
            <person name="Vitale D."/>
            <person name="Liguori R."/>
            <person name="Piravandi E."/>
            <person name="Massenet O."/>
            <person name="Quigley F."/>
            <person name="Clabauld G."/>
            <person name="Muendlein A."/>
            <person name="Felber R."/>
            <person name="Schnabl S."/>
            <person name="Hiller R."/>
            <person name="Schmidt W."/>
            <person name="Lecharny A."/>
            <person name="Aubourg S."/>
            <person name="Chefdor F."/>
            <person name="Cooke R."/>
            <person name="Berger C."/>
            <person name="Monfort A."/>
            <person name="Casacuberta E."/>
            <person name="Gibbons T."/>
            <person name="Weber N."/>
            <person name="Vandenbol M."/>
            <person name="Bargues M."/>
            <person name="Terol J."/>
            <person name="Torres A."/>
            <person name="Perez-Perez A."/>
            <person name="Purnelle B."/>
            <person name="Bent E."/>
            <person name="Johnson S."/>
            <person name="Tacon D."/>
            <person name="Jesse T."/>
            <person name="Heijnen L."/>
            <person name="Schwarz S."/>
            <person name="Scholler P."/>
            <person name="Heber S."/>
            <person name="Francs P."/>
            <person name="Bielke C."/>
            <person name="Frishman D."/>
            <person name="Haase D."/>
            <person name="Lemcke K."/>
            <person name="Mewes H.-W."/>
            <person name="Stocker S."/>
            <person name="Zaccaria P."/>
            <person name="Bevan M."/>
            <person name="Wilson R.K."/>
            <person name="de la Bastide M."/>
            <person name="Habermann K."/>
            <person name="Parnell L."/>
            <person name="Dedhia N."/>
            <person name="Gnoj L."/>
            <person name="Schutz K."/>
            <person name="Huang E."/>
            <person name="Spiegel L."/>
            <person name="Sekhon M."/>
            <person name="Murray J."/>
            <person name="Sheet P."/>
            <person name="Cordes M."/>
            <person name="Abu-Threideh J."/>
            <person name="Stoneking T."/>
            <person name="Kalicki J."/>
            <person name="Graves T."/>
            <person name="Harmon G."/>
            <person name="Edwards J."/>
            <person name="Latreille P."/>
            <person name="Courtney L."/>
            <person name="Cloud J."/>
            <person name="Abbott A."/>
            <person name="Scott K."/>
            <person name="Johnson D."/>
            <person name="Minx P."/>
            <person name="Bentley D."/>
            <person name="Fulton B."/>
            <person name="Miller N."/>
            <person name="Greco T."/>
            <person name="Kemp K."/>
            <person name="Kramer J."/>
            <person name="Fulton L."/>
            <person name="Mardis E."/>
            <person name="Dante M."/>
            <person name="Pepin K."/>
            <person name="Hillier L.W."/>
            <person name="Nelson J."/>
            <person name="Spieth J."/>
            <person name="Ryan E."/>
            <person name="Andrews S."/>
            <person name="Geisel C."/>
            <person name="Layman D."/>
            <person name="Du H."/>
            <person name="Ali J."/>
            <person name="Berghoff A."/>
            <person name="Jones K."/>
            <person name="Drone K."/>
            <person name="Cotton M."/>
            <person name="Joshu C."/>
            <person name="Antonoiu B."/>
            <person name="Zidanic M."/>
            <person name="Strong C."/>
            <person name="Sun H."/>
            <person name="Lamar B."/>
            <person name="Yordan C."/>
            <person name="Ma P."/>
            <person name="Zhong J."/>
            <person name="Preston R."/>
            <person name="Vil D."/>
            <person name="Shekher M."/>
            <person name="Matero A."/>
            <person name="Shah R."/>
            <person name="Swaby I.K."/>
            <person name="O'Shaughnessy A."/>
            <person name="Rodriguez M."/>
            <person name="Hoffman J."/>
            <person name="Till S."/>
            <person name="Granat S."/>
            <person name="Shohdy N."/>
            <person name="Hasegawa A."/>
            <person name="Hameed A."/>
            <person name="Lodhi M."/>
            <person name="Johnson A."/>
            <person name="Chen E."/>
            <person name="Marra M.A."/>
            <person name="Martienssen R."/>
            <person name="McCombie W.R."/>
        </authorList>
    </citation>
    <scope>NUCLEOTIDE SEQUENCE [LARGE SCALE GENOMIC DNA]</scope>
    <source>
        <strain>cv. Columbia</strain>
    </source>
</reference>
<reference key="6">
    <citation type="journal article" date="2017" name="Plant J.">
        <title>Araport11: a complete reannotation of the Arabidopsis thaliana reference genome.</title>
        <authorList>
            <person name="Cheng C.Y."/>
            <person name="Krishnakumar V."/>
            <person name="Chan A.P."/>
            <person name="Thibaud-Nissen F."/>
            <person name="Schobel S."/>
            <person name="Town C.D."/>
        </authorList>
    </citation>
    <scope>GENOME REANNOTATION</scope>
    <source>
        <strain>cv. Columbia</strain>
    </source>
</reference>
<reference key="7">
    <citation type="submission" date="2004-09" db="EMBL/GenBank/DDBJ databases">
        <title>Large-scale analysis of RIKEN Arabidopsis full-length (RAFL) cDNAs.</title>
        <authorList>
            <person name="Totoki Y."/>
            <person name="Seki M."/>
            <person name="Ishida J."/>
            <person name="Nakajima M."/>
            <person name="Enju A."/>
            <person name="Kamiya A."/>
            <person name="Narusaka M."/>
            <person name="Shin-i T."/>
            <person name="Nakagawa M."/>
            <person name="Sakamoto N."/>
            <person name="Oishi K."/>
            <person name="Kohara Y."/>
            <person name="Kobayashi M."/>
            <person name="Toyoda A."/>
            <person name="Sakaki Y."/>
            <person name="Sakurai T."/>
            <person name="Iida K."/>
            <person name="Akiyama K."/>
            <person name="Satou M."/>
            <person name="Toyoda T."/>
            <person name="Konagaya A."/>
            <person name="Carninci P."/>
            <person name="Kawai J."/>
            <person name="Hayashizaki Y."/>
            <person name="Shinozaki K."/>
        </authorList>
    </citation>
    <scope>NUCLEOTIDE SEQUENCE [LARGE SCALE MRNA]</scope>
    <source>
        <strain>cv. Columbia</strain>
    </source>
</reference>
<reference key="8">
    <citation type="journal article" date="2000" name="Plant J.">
        <title>Arabidopsis ARR1 and ARR2 response regulators operate as transcriptional activators.</title>
        <authorList>
            <person name="Sakai H."/>
            <person name="Aoyama T."/>
            <person name="Oka A."/>
        </authorList>
    </citation>
    <scope>DNA-BINDING SPECIFICITY</scope>
    <scope>SUBCELLULAR LOCATION</scope>
</reference>
<reference key="9">
    <citation type="journal article" date="2001" name="Nature">
        <title>Two-component circuitry in Arabidopsis cytokinin signal transduction.</title>
        <authorList>
            <person name="Hwang I."/>
            <person name="Sheen J."/>
        </authorList>
    </citation>
    <scope>FUNCTION</scope>
    <scope>SUBCELLULAR LOCATION</scope>
</reference>
<reference key="10">
    <citation type="journal article" date="2004" name="Biosci. Biotechnol. Biochem.">
        <title>Comparative studies of the AHP histidine-containing phosphotransmitters implicated in His-to-Asp phosphorelay in Arabidopsis thaliana.</title>
        <authorList>
            <person name="Tanaka Y."/>
            <person name="Suzuki T."/>
            <person name="Yamashino T."/>
            <person name="Mizuno T."/>
        </authorList>
    </citation>
    <scope>INTERACTION</scope>
</reference>
<reference key="11">
    <citation type="journal article" date="2004" name="Plant Physiol.">
        <title>Type-B response regulators display overlapping expression patterns in Arabidopsis.</title>
        <authorList>
            <person name="Mason M.G."/>
            <person name="Li J."/>
            <person name="Mathews D.E."/>
            <person name="Kieber J.J."/>
            <person name="Schaller G.E."/>
        </authorList>
    </citation>
    <scope>TISSUE SPECIFICITY</scope>
</reference>
<reference key="12">
    <citation type="journal article" date="2006" name="Proc. Natl. Acad. Sci. U.S.A.">
        <title>Cytokinin-mediated control of leaf longevity by AHK3 through phosphorylation of ARR2 in Arabidopsis.</title>
        <authorList>
            <person name="Kim H.J."/>
            <person name="Ryu H."/>
            <person name="Hong S.H."/>
            <person name="Woo H.R."/>
            <person name="Lim P.O."/>
            <person name="Lee I.C."/>
            <person name="Sheen J."/>
            <person name="Nam H.G."/>
            <person name="Hwang I."/>
        </authorList>
    </citation>
    <scope>FUNCTION</scope>
    <scope>MUTAGENESIS OF ASP-80</scope>
    <scope>PHOSPHORYLATION AT ASP-80</scope>
</reference>
<feature type="chain" id="PRO_0000132294" description="Two-component response regulator ARR2">
    <location>
        <begin position="1"/>
        <end position="664"/>
    </location>
</feature>
<feature type="domain" description="Response regulatory" evidence="3">
    <location>
        <begin position="29"/>
        <end position="144"/>
    </location>
</feature>
<feature type="DNA-binding region" description="Myb-like GARP" evidence="4">
    <location>
        <begin position="218"/>
        <end position="268"/>
    </location>
</feature>
<feature type="region of interest" description="Disordered" evidence="5">
    <location>
        <begin position="1"/>
        <end position="21"/>
    </location>
</feature>
<feature type="region of interest" description="Disordered" evidence="5">
    <location>
        <begin position="151"/>
        <end position="215"/>
    </location>
</feature>
<feature type="region of interest" description="Disordered" evidence="5">
    <location>
        <begin position="554"/>
        <end position="589"/>
    </location>
</feature>
<feature type="short sequence motif" description="Nuclear localization signal" evidence="2">
    <location>
        <begin position="215"/>
        <end position="218"/>
    </location>
</feature>
<feature type="compositionally biased region" description="Basic and acidic residues" evidence="5">
    <location>
        <begin position="165"/>
        <end position="178"/>
    </location>
</feature>
<feature type="compositionally biased region" description="Polar residues" evidence="5">
    <location>
        <begin position="180"/>
        <end position="191"/>
    </location>
</feature>
<feature type="compositionally biased region" description="Acidic residues" evidence="5">
    <location>
        <begin position="200"/>
        <end position="209"/>
    </location>
</feature>
<feature type="compositionally biased region" description="Low complexity" evidence="5">
    <location>
        <begin position="554"/>
        <end position="567"/>
    </location>
</feature>
<feature type="modified residue" description="4-aspartylphosphate" evidence="3 11 12">
    <location>
        <position position="80"/>
    </location>
</feature>
<feature type="sequence variant" description="In strain: cv. Landsberg erecta." evidence="11">
    <original>S</original>
    <variation>I</variation>
    <location>
        <position position="62"/>
    </location>
</feature>
<feature type="sequence variant" description="In strain: cv. Landsberg erecta." evidence="11">
    <original>N</original>
    <variation>I</variation>
    <location>
        <position position="283"/>
    </location>
</feature>
<feature type="sequence variant" description="In strain: cv. Landsberg erecta." evidence="11">
    <original>L</original>
    <variation>V</variation>
    <location>
        <position position="385"/>
    </location>
</feature>
<feature type="sequence variant" description="In strain: cv. Landsberg erecta." evidence="11">
    <original>D</original>
    <variation>G</variation>
    <location>
        <position position="655"/>
    </location>
</feature>
<feature type="mutagenesis site" description="Impaired cytokinin-mediated and ethylene-mediated phosphorylation, severe pleiotropic aberrations in growth and development." evidence="11 12">
    <original>D</original>
    <variation>N</variation>
    <location>
        <position position="80"/>
    </location>
</feature>
<feature type="sequence conflict" description="In Ref. 7; BAD43141." evidence="14" ref="7">
    <original>D</original>
    <variation>G</variation>
    <location>
        <position position="35"/>
    </location>
</feature>
<feature type="sequence conflict" description="In Ref. 7; BAD43141." evidence="14" ref="7">
    <original>H</original>
    <variation>R</variation>
    <location>
        <position position="518"/>
    </location>
</feature>
<sequence length="664" mass="72578">MVNPGHGRGPDSGTAAGGSNSDPFPANLRVLVVDDDPTCLMILERMLMTCLYRVTKCNRAESALSLLRKNKNGFDIVISDVHMPDMDGFKLLEHVGLEMDLPVIMMSADDSKSVVLKGVTHGAVDYLIKPVRIEALKNIWQHVVRKKRNEWNVSEHSGGSIEDTGGDRDRQQQHREDADNNSSSVNEGNGRSSRKRKEEEVDDQGDDKEDSSSLKKPRVVWSVELHQQFVAAVNQLGVDKAVPKKILEMMNVPGLTRENVASHLQKYRIYLRRLGGVSQHQGNMNHSFMTGQDQSFGPLSSLNGFDLQSLAVTGQLPPQSLAQLQAAGLGRPTLAKPGMSVSPLVDQRSIFNFENPKIRFGDGHGQTMNNGNLLHGVPTGSHMRLRPGQNVQSSGMMLPVADQLPRGGPSMLPSLGQQPILSSSVSRRSDLTGALAVRNSIPETNSRVLPTTHSVFNNFPADLPRSSFPLASAPGISVPVSVSYQEEVNSSDAKGGSSAATAGFGNPSYDIFNDFPQHQQHNKNISNKLNDWDLRNMGLVFSSNQDAATATATAAFSTSEAYSSSSTQRKRRETDATVVGEHGQNLQSPSRNLYHLNHVFMDGGSVRVKSERVAETVTCPPANTLFHEQYNQEDLMSAFLKQEGIPSVDNEFEFDGYSIDNIQV</sequence>